<proteinExistence type="inferred from homology"/>
<accession>A7HU86</accession>
<feature type="chain" id="PRO_0000357095" description="Methylthioribulose-1-phosphate dehydratase">
    <location>
        <begin position="1"/>
        <end position="204"/>
    </location>
</feature>
<feature type="binding site" evidence="1">
    <location>
        <position position="95"/>
    </location>
    <ligand>
        <name>Zn(2+)</name>
        <dbReference type="ChEBI" id="CHEBI:29105"/>
    </ligand>
</feature>
<feature type="binding site" evidence="1">
    <location>
        <position position="97"/>
    </location>
    <ligand>
        <name>Zn(2+)</name>
        <dbReference type="ChEBI" id="CHEBI:29105"/>
    </ligand>
</feature>
<comment type="function">
    <text evidence="1">Catalyzes the dehydration of methylthioribulose-1-phosphate (MTRu-1-P) into 2,3-diketo-5-methylthiopentyl-1-phosphate (DK-MTP-1-P).</text>
</comment>
<comment type="catalytic activity">
    <reaction evidence="1">
        <text>5-(methylsulfanyl)-D-ribulose 1-phosphate = 5-methylsulfanyl-2,3-dioxopentyl phosphate + H2O</text>
        <dbReference type="Rhea" id="RHEA:15549"/>
        <dbReference type="ChEBI" id="CHEBI:15377"/>
        <dbReference type="ChEBI" id="CHEBI:58548"/>
        <dbReference type="ChEBI" id="CHEBI:58828"/>
        <dbReference type="EC" id="4.2.1.109"/>
    </reaction>
</comment>
<comment type="cofactor">
    <cofactor evidence="1">
        <name>Zn(2+)</name>
        <dbReference type="ChEBI" id="CHEBI:29105"/>
    </cofactor>
    <text evidence="1">Binds 1 zinc ion per subunit.</text>
</comment>
<comment type="pathway">
    <text evidence="1">Amino-acid biosynthesis; L-methionine biosynthesis via salvage pathway; L-methionine from S-methyl-5-thio-alpha-D-ribose 1-phosphate: step 2/6.</text>
</comment>
<comment type="similarity">
    <text evidence="1">Belongs to the aldolase class II family. MtnB subfamily.</text>
</comment>
<comment type="sequence caution" evidence="2">
    <conflict type="erroneous initiation">
        <sequence resource="EMBL-CDS" id="ABS63469"/>
    </conflict>
</comment>
<name>MTNB_PARL1</name>
<organism>
    <name type="scientific">Parvibaculum lavamentivorans (strain DS-1 / DSM 13023 / NCIMB 13966)</name>
    <dbReference type="NCBI Taxonomy" id="402881"/>
    <lineage>
        <taxon>Bacteria</taxon>
        <taxon>Pseudomonadati</taxon>
        <taxon>Pseudomonadota</taxon>
        <taxon>Alphaproteobacteria</taxon>
        <taxon>Hyphomicrobiales</taxon>
        <taxon>Parvibaculaceae</taxon>
        <taxon>Parvibaculum</taxon>
    </lineage>
</organism>
<sequence>MVPRLDFAEAAKGVIAMARFAGARGWVPATSGNFSVRMNELSAALTATGANKAELDENGVIEAEIAGAKHPRASAEAPLHLARYRAAPGIGAISHMHSMAATVLSRRHAGTGAVRLEGWELMKAFAGVTTHDMSIDIPIVPNDQDTDRLAALVEERLDKDSICPGYLIAGHGLYVWGASAAETIRHMEAFDFLLTAQLHEESAR</sequence>
<gene>
    <name evidence="1" type="primary">mtnB</name>
    <name type="ordered locus">Plav_1852</name>
</gene>
<dbReference type="EC" id="4.2.1.109" evidence="1"/>
<dbReference type="EMBL" id="CP000774">
    <property type="protein sequence ID" value="ABS63469.1"/>
    <property type="status" value="ALT_INIT"/>
    <property type="molecule type" value="Genomic_DNA"/>
</dbReference>
<dbReference type="RefSeq" id="WP_012110762.1">
    <property type="nucleotide sequence ID" value="NC_009719.1"/>
</dbReference>
<dbReference type="SMR" id="A7HU86"/>
<dbReference type="STRING" id="402881.Plav_1852"/>
<dbReference type="KEGG" id="pla:Plav_1852"/>
<dbReference type="eggNOG" id="COG0235">
    <property type="taxonomic scope" value="Bacteria"/>
</dbReference>
<dbReference type="HOGENOM" id="CLU_006033_4_1_5"/>
<dbReference type="OrthoDB" id="5291399at2"/>
<dbReference type="UniPathway" id="UPA00904">
    <property type="reaction ID" value="UER00875"/>
</dbReference>
<dbReference type="Proteomes" id="UP000006377">
    <property type="component" value="Chromosome"/>
</dbReference>
<dbReference type="GO" id="GO:0005829">
    <property type="term" value="C:cytosol"/>
    <property type="evidence" value="ECO:0007669"/>
    <property type="project" value="TreeGrafter"/>
</dbReference>
<dbReference type="GO" id="GO:0016832">
    <property type="term" value="F:aldehyde-lyase activity"/>
    <property type="evidence" value="ECO:0007669"/>
    <property type="project" value="TreeGrafter"/>
</dbReference>
<dbReference type="GO" id="GO:0046570">
    <property type="term" value="F:methylthioribulose 1-phosphate dehydratase activity"/>
    <property type="evidence" value="ECO:0007669"/>
    <property type="project" value="UniProtKB-UniRule"/>
</dbReference>
<dbReference type="GO" id="GO:0008270">
    <property type="term" value="F:zinc ion binding"/>
    <property type="evidence" value="ECO:0007669"/>
    <property type="project" value="UniProtKB-UniRule"/>
</dbReference>
<dbReference type="GO" id="GO:0019509">
    <property type="term" value="P:L-methionine salvage from methylthioadenosine"/>
    <property type="evidence" value="ECO:0007669"/>
    <property type="project" value="UniProtKB-UniRule"/>
</dbReference>
<dbReference type="GO" id="GO:0019323">
    <property type="term" value="P:pentose catabolic process"/>
    <property type="evidence" value="ECO:0007669"/>
    <property type="project" value="TreeGrafter"/>
</dbReference>
<dbReference type="Gene3D" id="3.40.225.10">
    <property type="entry name" value="Class II aldolase/adducin N-terminal domain"/>
    <property type="match status" value="1"/>
</dbReference>
<dbReference type="HAMAP" id="MF_01677">
    <property type="entry name" value="Salvage_MtnB"/>
    <property type="match status" value="1"/>
</dbReference>
<dbReference type="InterPro" id="IPR050197">
    <property type="entry name" value="Aldolase_class_II_sugar_metab"/>
</dbReference>
<dbReference type="InterPro" id="IPR001303">
    <property type="entry name" value="Aldolase_II/adducin_N"/>
</dbReference>
<dbReference type="InterPro" id="IPR036409">
    <property type="entry name" value="Aldolase_II/adducin_N_sf"/>
</dbReference>
<dbReference type="InterPro" id="IPR017714">
    <property type="entry name" value="MethylthioRu-1-P_deHdtase_MtnB"/>
</dbReference>
<dbReference type="NCBIfam" id="TIGR03328">
    <property type="entry name" value="salvage_mtnB"/>
    <property type="match status" value="1"/>
</dbReference>
<dbReference type="PANTHER" id="PTHR22789:SF0">
    <property type="entry name" value="3-OXO-TETRONATE 4-PHOSPHATE DECARBOXYLASE-RELATED"/>
    <property type="match status" value="1"/>
</dbReference>
<dbReference type="PANTHER" id="PTHR22789">
    <property type="entry name" value="FUCULOSE PHOSPHATE ALDOLASE"/>
    <property type="match status" value="1"/>
</dbReference>
<dbReference type="Pfam" id="PF00596">
    <property type="entry name" value="Aldolase_II"/>
    <property type="match status" value="1"/>
</dbReference>
<dbReference type="SMART" id="SM01007">
    <property type="entry name" value="Aldolase_II"/>
    <property type="match status" value="1"/>
</dbReference>
<dbReference type="SUPFAM" id="SSF53639">
    <property type="entry name" value="AraD/HMP-PK domain-like"/>
    <property type="match status" value="1"/>
</dbReference>
<protein>
    <recommendedName>
        <fullName evidence="1">Methylthioribulose-1-phosphate dehydratase</fullName>
        <shortName evidence="1">MTRu-1-P dehydratase</shortName>
        <ecNumber evidence="1">4.2.1.109</ecNumber>
    </recommendedName>
</protein>
<keyword id="KW-0028">Amino-acid biosynthesis</keyword>
<keyword id="KW-0456">Lyase</keyword>
<keyword id="KW-0479">Metal-binding</keyword>
<keyword id="KW-0486">Methionine biosynthesis</keyword>
<keyword id="KW-1185">Reference proteome</keyword>
<keyword id="KW-0862">Zinc</keyword>
<reference key="1">
    <citation type="journal article" date="2011" name="Stand. Genomic Sci.">
        <title>Complete genome sequence of Parvibaculum lavamentivorans type strain (DS-1(T)).</title>
        <authorList>
            <person name="Schleheck D."/>
            <person name="Weiss M."/>
            <person name="Pitluck S."/>
            <person name="Bruce D."/>
            <person name="Land M.L."/>
            <person name="Han S."/>
            <person name="Saunders E."/>
            <person name="Tapia R."/>
            <person name="Detter C."/>
            <person name="Brettin T."/>
            <person name="Han J."/>
            <person name="Woyke T."/>
            <person name="Goodwin L."/>
            <person name="Pennacchio L."/>
            <person name="Nolan M."/>
            <person name="Cook A.M."/>
            <person name="Kjelleberg S."/>
            <person name="Thomas T."/>
        </authorList>
    </citation>
    <scope>NUCLEOTIDE SEQUENCE [LARGE SCALE GENOMIC DNA]</scope>
    <source>
        <strain>DS-1 / DSM 13023 / NCIMB 13966</strain>
    </source>
</reference>
<evidence type="ECO:0000255" key="1">
    <source>
        <dbReference type="HAMAP-Rule" id="MF_01677"/>
    </source>
</evidence>
<evidence type="ECO:0000305" key="2"/>